<comment type="function">
    <text evidence="2 3 4 5 7 8">Transcription coactivator involved in regulation of the aflatoxin biosynthesis gene cluster with aflR (PubMed:11913765, PubMed:12655397, PubMed:15006741, PubMed:15054098, PubMed:23605486). The ratio of the expression data between aflS:aflR plays a crucial role in the regulation of aflatoxins production (PubMed:23605486). A high ratio, produced at a range between 17 and 30 degrees Celsius, corresponds with the production profile of aflatoxin G1 biosynthesis (PubMed:23605486). A low ratio, produced over 30 degrees Celsius, is related to aflatoxin B1 biosynthesis (PubMed:23605486). AflJ may act in aflR transport to or from the nucleus, thus controlling the availability of aflR for transcriptional activation of aflatoxin biosynthesis cluster genes (PubMed:23342682). AflJ may also assist in directing endosomes to the cytoplasmic membrane for aflatoxin export (PubMed:23342682).</text>
</comment>
<comment type="subunit">
    <text evidence="3 5 7">Interacts with aflR (PubMed:12655397, PubMed:15054098, PubMed:23342682).</text>
</comment>
<comment type="subcellular location">
    <subcellularLocation>
        <location evidence="7">Nucleus</location>
    </subcellularLocation>
    <subcellularLocation>
        <location evidence="7">Endosome</location>
    </subcellularLocation>
</comment>
<comment type="induction">
    <text evidence="6 9">Expression is positively regulated by the developmental and secondary metabolism regulator veA (PubMed:15294809). Expression is repressed during Streptomyces-Aspergillus interactions (PubMed:25741015).</text>
</comment>
<comment type="disruption phenotype">
    <text evidence="3">Leads to significant decrease in the transcript levels of the genes for early (aflC and aflD), middle (aflM) and later (aflP) steps in the aflatoxin biosynthetic pathway (PubMed:12655397).</text>
</comment>
<comment type="sequence caution" evidence="11">
    <conflict type="erroneous gene model prediction">
        <sequence resource="EMBL-CDS" id="KJK60754"/>
    </conflict>
</comment>
<feature type="chain" id="PRO_0000438339" description="Aflatoxin cluster transcriptional coactivator aflS">
    <location>
        <begin position="1"/>
        <end position="438"/>
    </location>
</feature>
<feature type="domain" description="HTH iclR-type" evidence="1">
    <location>
        <begin position="65"/>
        <end position="134"/>
    </location>
</feature>
<feature type="DNA-binding region" description="H-T-H motif" evidence="1">
    <location>
        <begin position="95"/>
        <end position="114"/>
    </location>
</feature>
<organism>
    <name type="scientific">Aspergillus parasiticus (strain ATCC 56775 / NRRL 5862 / SRRC 143 / SU-1)</name>
    <dbReference type="NCBI Taxonomy" id="1403190"/>
    <lineage>
        <taxon>Eukaryota</taxon>
        <taxon>Fungi</taxon>
        <taxon>Dikarya</taxon>
        <taxon>Ascomycota</taxon>
        <taxon>Pezizomycotina</taxon>
        <taxon>Eurotiomycetes</taxon>
        <taxon>Eurotiomycetidae</taxon>
        <taxon>Eurotiales</taxon>
        <taxon>Aspergillaceae</taxon>
        <taxon>Aspergillus</taxon>
        <taxon>Aspergillus subgen. Circumdati</taxon>
    </lineage>
</organism>
<protein>
    <recommendedName>
        <fullName evidence="11">Aflatoxin cluster transcriptional coactivator aflS</fullName>
    </recommendedName>
    <alternativeName>
        <fullName evidence="10">Aflatoxin biosynthesis protein S</fullName>
    </alternativeName>
</protein>
<keyword id="KW-0238">DNA-binding</keyword>
<keyword id="KW-0967">Endosome</keyword>
<keyword id="KW-0539">Nucleus</keyword>
<keyword id="KW-1185">Reference proteome</keyword>
<keyword id="KW-0804">Transcription</keyword>
<keyword id="KW-0805">Transcription regulation</keyword>
<proteinExistence type="evidence at protein level"/>
<gene>
    <name evidence="10" type="primary">aflS</name>
    <name type="synonym">aflJ</name>
    <name type="ORF">P875_00052983</name>
</gene>
<accession>O42716</accession>
<accession>A0A0F0HZ07</accession>
<evidence type="ECO:0000255" key="1">
    <source>
        <dbReference type="PROSITE-ProRule" id="PRU00393"/>
    </source>
</evidence>
<evidence type="ECO:0000269" key="2">
    <source>
    </source>
</evidence>
<evidence type="ECO:0000269" key="3">
    <source>
    </source>
</evidence>
<evidence type="ECO:0000269" key="4">
    <source>
    </source>
</evidence>
<evidence type="ECO:0000269" key="5">
    <source>
    </source>
</evidence>
<evidence type="ECO:0000269" key="6">
    <source>
    </source>
</evidence>
<evidence type="ECO:0000269" key="7">
    <source>
    </source>
</evidence>
<evidence type="ECO:0000269" key="8">
    <source>
    </source>
</evidence>
<evidence type="ECO:0000269" key="9">
    <source>
    </source>
</evidence>
<evidence type="ECO:0000303" key="10">
    <source>
    </source>
</evidence>
<evidence type="ECO:0000305" key="11"/>
<dbReference type="EMBL" id="AF002660">
    <property type="protein sequence ID" value="AAB94411.2"/>
    <property type="molecule type" value="Genomic_DNA"/>
</dbReference>
<dbReference type="EMBL" id="AY371490">
    <property type="protein sequence ID" value="AAS66019.1"/>
    <property type="molecule type" value="Genomic_DNA"/>
</dbReference>
<dbReference type="EMBL" id="JZEE01000729">
    <property type="protein sequence ID" value="KJK60754.1"/>
    <property type="status" value="ALT_SEQ"/>
    <property type="molecule type" value="Genomic_DNA"/>
</dbReference>
<dbReference type="SMR" id="O42716"/>
<dbReference type="STRING" id="1403190.O42716"/>
<dbReference type="OrthoDB" id="1606438at2759"/>
<dbReference type="Proteomes" id="UP000033540">
    <property type="component" value="Unassembled WGS sequence"/>
</dbReference>
<dbReference type="GO" id="GO:0005768">
    <property type="term" value="C:endosome"/>
    <property type="evidence" value="ECO:0007669"/>
    <property type="project" value="UniProtKB-SubCell"/>
</dbReference>
<dbReference type="GO" id="GO:0005634">
    <property type="term" value="C:nucleus"/>
    <property type="evidence" value="ECO:0007669"/>
    <property type="project" value="UniProtKB-SubCell"/>
</dbReference>
<dbReference type="GO" id="GO:0003677">
    <property type="term" value="F:DNA binding"/>
    <property type="evidence" value="ECO:0007669"/>
    <property type="project" value="UniProtKB-KW"/>
</dbReference>
<dbReference type="GO" id="GO:1900179">
    <property type="term" value="P:positive regulation of aflatoxin biosynthetic process"/>
    <property type="evidence" value="ECO:0000314"/>
    <property type="project" value="GO_Central"/>
</dbReference>
<dbReference type="FunFam" id="3.40.50.150:FF:000582">
    <property type="entry name" value="AflS/ pathway regulator"/>
    <property type="match status" value="1"/>
</dbReference>
<dbReference type="Gene3D" id="3.40.50.150">
    <property type="entry name" value="Vaccinia Virus protein VP39"/>
    <property type="match status" value="1"/>
</dbReference>
<dbReference type="Gene3D" id="1.10.10.10">
    <property type="entry name" value="Winged helix-like DNA-binding domain superfamily/Winged helix DNA-binding domain"/>
    <property type="match status" value="1"/>
</dbReference>
<dbReference type="InterPro" id="IPR029063">
    <property type="entry name" value="SAM-dependent_MTases_sf"/>
</dbReference>
<dbReference type="InterPro" id="IPR036388">
    <property type="entry name" value="WH-like_DNA-bd_sf"/>
</dbReference>
<dbReference type="InterPro" id="IPR036390">
    <property type="entry name" value="WH_DNA-bd_sf"/>
</dbReference>
<dbReference type="PANTHER" id="PTHR43712:SF15">
    <property type="entry name" value="MONODICTYPHENONE CLUSTER TRANSCRIPTIONAL COACTIVATOR MDPA"/>
    <property type="match status" value="1"/>
</dbReference>
<dbReference type="PANTHER" id="PTHR43712">
    <property type="entry name" value="PUTATIVE (AFU_ORTHOLOGUE AFUA_4G14580)-RELATED"/>
    <property type="match status" value="1"/>
</dbReference>
<dbReference type="SUPFAM" id="SSF46785">
    <property type="entry name" value="Winged helix' DNA-binding domain"/>
    <property type="match status" value="1"/>
</dbReference>
<reference key="1">
    <citation type="submission" date="2000-08" db="EMBL/GenBank/DDBJ databases">
        <title>Overexpression of the Aspergillus parasiticus aflJ gene, in conjunction with the aflR regulatory gene, elevates aflatoxin biosynthesis and affects sclerotial development.</title>
        <authorList>
            <person name="Chang P.-K."/>
            <person name="Cotty P.J."/>
            <person name="Bhatnagar D."/>
            <person name="Bennett J.W."/>
            <person name="Cleveland T.E."/>
        </authorList>
    </citation>
    <scope>NUCLEOTIDE SEQUENCE [GENOMIC DNA]</scope>
    <source>
        <strain>ATCC 56775 / NRRL 5862 / SRRC 143 / SU-1</strain>
    </source>
</reference>
<reference key="2">
    <citation type="journal article" date="2004" name="Appl. Environ. Microbiol.">
        <title>Clustered pathway genes in aflatoxin biosynthesis.</title>
        <authorList>
            <person name="Yu J."/>
            <person name="Chang P.K."/>
            <person name="Ehrlich K.C."/>
            <person name="Cary J.W."/>
            <person name="Bhatnagar D."/>
            <person name="Cleveland T.E."/>
            <person name="Payne G.A."/>
            <person name="Linz J.E."/>
            <person name="Woloshuk C.P."/>
            <person name="Bennett J.W."/>
        </authorList>
    </citation>
    <scope>NUCLEOTIDE SEQUENCE [GENOMIC DNA]</scope>
    <scope>FUNCTION</scope>
    <scope>NOMENCLATURE</scope>
    <source>
        <strain>ATCC 56775 / NRRL 5862 / SRRC 143 / SU-1</strain>
    </source>
</reference>
<reference key="3">
    <citation type="journal article" date="2004" name="FEBS Lett.">
        <title>Completed sequence of aflatoxin pathway gene cluster in Aspergillus parasiticus.</title>
        <authorList>
            <person name="Yu J."/>
            <person name="Bhatnagar D."/>
            <person name="Cleveland T.E."/>
        </authorList>
    </citation>
    <scope>NUCLEOTIDE SEQUENCE [GENOMIC DNA]</scope>
    <source>
        <strain>ATCC 56775 / NRRL 5862 / SRRC 143 / SU-1</strain>
    </source>
</reference>
<reference key="4">
    <citation type="submission" date="2015-02" db="EMBL/GenBank/DDBJ databases">
        <title>Draft genome sequence of Aspergillus parasiticus SU-1.</title>
        <authorList>
            <person name="Yu J."/>
            <person name="Fedorova N."/>
            <person name="Yin Y."/>
            <person name="Losada L."/>
            <person name="Zafar N."/>
            <person name="Taujale R."/>
            <person name="Ehrlich K.C."/>
            <person name="Bhatnagar D."/>
            <person name="Cleveland T.E."/>
            <person name="Bennett J.W."/>
            <person name="Nierman W.C."/>
        </authorList>
    </citation>
    <scope>NUCLEOTIDE SEQUENCE [LARGE SCALE GENOMIC DNA]</scope>
    <source>
        <strain>ATCC 56775 / NRRL 5862 / SRRC 143 / SU-1</strain>
    </source>
</reference>
<reference key="5">
    <citation type="journal article" date="2002" name="Mycopathologia">
        <title>Association of aflatoxin biosynthesis and sclerotial development in Aspergillus parasiticus.</title>
        <authorList>
            <person name="Chang P.K."/>
            <person name="Bennett J.W."/>
            <person name="Cotty P.J."/>
        </authorList>
    </citation>
    <scope>FUNCTION</scope>
</reference>
<reference key="6">
    <citation type="journal article" date="2003" name="Mol. Genet. Genomics">
        <title>The Aspergillus parasiticus protein AFLJ interacts with the aflatoxin pathway-specific regulator AFLR.</title>
        <authorList>
            <person name="Chang P.K."/>
        </authorList>
    </citation>
    <scope>FUNCTION</scope>
    <scope>DISRUPTION PHENOTYPE</scope>
    <scope>INTERACTION WITH AFLR</scope>
</reference>
<reference key="7">
    <citation type="journal article" date="2004" name="Appl. Environ. Microbiol.">
        <title>veA is required for toxin and sclerotial production in Aspergillus parasiticus.</title>
        <authorList>
            <person name="Calvo A.M."/>
            <person name="Bok J."/>
            <person name="Brooks W."/>
            <person name="Keller N.P."/>
        </authorList>
    </citation>
    <scope>INDUCTION</scope>
</reference>
<reference key="8">
    <citation type="journal article" date="2004" name="J. Biol. Chem.">
        <title>A novel cAMP-response element, CRE1, modulates expression of nor-1 in Aspergillus parasiticus.</title>
        <authorList>
            <person name="Roze L.V."/>
            <person name="Miller M.J."/>
            <person name="Rarick M."/>
            <person name="Mahanti N."/>
            <person name="Linz J.E."/>
        </authorList>
    </citation>
    <scope>FUNCTION</scope>
    <scope>INTERACTION WITH AFLR</scope>
</reference>
<reference key="9">
    <citation type="journal article" date="2010" name="Mycotoxin Res.">
        <title>The production of aflatoxin B1 or G 1 by Aspergillus parasiticus at various combinations of temperature and water activity is related to the ratio of aflS to aflR expression.</title>
        <authorList>
            <person name="Schmidt-Heydt M."/>
            <person name="Ruefer C.E."/>
            <person name="Abdel-Hadi A."/>
            <person name="Magan N."/>
            <person name="Geisen R."/>
        </authorList>
    </citation>
    <scope>FUNCTION</scope>
</reference>
<reference key="10">
    <citation type="journal article" date="2012" name="Toxins">
        <title>Association with AflR in endosomes reveals new functions for AflJ in aflatoxin biosynthesis.</title>
        <authorList>
            <person name="Ehrlich K.C."/>
            <person name="Mack B.M."/>
            <person name="Wei Q."/>
            <person name="Li P."/>
            <person name="Roze L.V."/>
            <person name="Dazzo F."/>
            <person name="Cary J.W."/>
            <person name="Bhatnagar D."/>
            <person name="Linz J.E."/>
        </authorList>
    </citation>
    <scope>FUNCTION</scope>
    <scope>INTERACTION WITH AFLR</scope>
    <scope>SUBCELLULAR LOCATION</scope>
</reference>
<reference key="11">
    <citation type="journal article" date="2015" name="Microbiology">
        <title>Reduction of aflatoxin production by Aspergillus flavus and Aspergillus parasiticus in interaction with Streptomyces.</title>
        <authorList>
            <person name="Verheecke C."/>
            <person name="Liboz T."/>
            <person name="Anson P."/>
            <person name="Diaz R."/>
            <person name="Mathieu F."/>
        </authorList>
    </citation>
    <scope>INDUCTION</scope>
</reference>
<name>AFLS_ASPPU</name>
<sequence>MTLTDLETCAEEIATAARTLARDGHSGGYSAGLPDHLRAVQRTLIANASQVLALASQPADLVRQLALYNQLLACLRWLGEFQVLACIPLDESVPFEDVADIAGVPECRLRRLVRPLFTIGFLCEPSPGHVAHSVLSKQFVTQPALLDAILFMSETLAPSASAMGTQTRRFGASEQAGDSAWNMAVGSDSPFAACLQQRPKVKRQLGAYLSYVSSAIDAGVEDTLTRMNWQNLGMATVVHVGAQSPSLVVALAPQFPSLRFLVQTEAKAESGGHQPCLDNHGIPALKLASIPLHLRARITWGTRLSTATQPVLDAAVYLISIPFPSPQSPAMEITMRVAQALKAHVEVLRNNSDARLILTLPMSSATRSMDAAARAAVSLSDLSLLQLTNGGSLNMGEIRDLLRSRSDGLVVMREVRSPTNAVIAFEIQYRVDNDDNRY</sequence>